<feature type="signal peptide" evidence="5">
    <location>
        <begin position="1"/>
        <end position="26"/>
    </location>
</feature>
<feature type="chain" id="PRO_5001929416" description="Apolipoprotein C-I, basic form">
    <location>
        <begin position="27"/>
        <end position="83"/>
    </location>
</feature>
<feature type="chain" id="PRO_0000440145" description="Cholesteryl ester transfer inhibitor protein" evidence="3">
    <location>
        <begin position="27"/>
        <end position="64"/>
    </location>
</feature>
<feature type="chain" id="PRO_0000440146" description="Truncated apolipoprotein C-I, basic form" evidence="4">
    <location>
        <begin position="29"/>
        <end position="83"/>
    </location>
</feature>
<reference key="1">
    <citation type="submission" date="2012-03" db="EMBL/GenBank/DDBJ databases">
        <title>Whole genome assembly of Papio anubis.</title>
        <authorList>
            <person name="Liu Y.L."/>
            <person name="Abraham K.A."/>
            <person name="Akbar H.A."/>
            <person name="Ali S.A."/>
            <person name="Anosike U.A."/>
            <person name="Aqrawi P.A."/>
            <person name="Arias F.A."/>
            <person name="Attaway T.A."/>
            <person name="Awwad R.A."/>
            <person name="Babu C.B."/>
            <person name="Bandaranaike D.B."/>
            <person name="Battles P.B."/>
            <person name="Bell A.B."/>
            <person name="Beltran B.B."/>
            <person name="Berhane-Mersha D.B."/>
            <person name="Bess C.B."/>
            <person name="Bickham C.B."/>
            <person name="Bolden T.B."/>
            <person name="Carter K.C."/>
            <person name="Chau D.C."/>
            <person name="Chavez A.C."/>
            <person name="Clerc-Blankenburg K.C."/>
            <person name="Coyle M.C."/>
            <person name="Dao M.D."/>
            <person name="Davila M.L.D."/>
            <person name="Davy-Carroll L.D."/>
            <person name="Denson S.D."/>
            <person name="Dinh H.D."/>
            <person name="Fernandez S.F."/>
            <person name="Fernando P.F."/>
            <person name="Forbes L.F."/>
            <person name="Francis C.F."/>
            <person name="Francisco L.F."/>
            <person name="Fu Q.F."/>
            <person name="Garcia-Iii R.G."/>
            <person name="Garrett T.G."/>
            <person name="Gross S.G."/>
            <person name="Gubbala S.G."/>
            <person name="Hirani K.H."/>
            <person name="Hogues M.H."/>
            <person name="Hollins B.H."/>
            <person name="Jackson L.J."/>
            <person name="Javaid M.J."/>
            <person name="Jhangiani S.J."/>
            <person name="Johnson A.J."/>
            <person name="Johnson B.J."/>
            <person name="Jones J.J."/>
            <person name="Joshi V.J."/>
            <person name="Kalu J.K."/>
            <person name="Khan N.K."/>
            <person name="Korchina V.K."/>
            <person name="Kovar C.K."/>
            <person name="Lago L.L."/>
            <person name="Lara F.L."/>
            <person name="Le T.-K.L."/>
            <person name="Lee S.L."/>
            <person name="Legall-Iii F.L."/>
            <person name="Lemon S.L."/>
            <person name="Liu J.L."/>
            <person name="Liu Y.-S.L."/>
            <person name="Liyanage D.L."/>
            <person name="Lopez J.L."/>
            <person name="Lorensuhewa L.L."/>
            <person name="Mata R.M."/>
            <person name="Mathew T.M."/>
            <person name="Mercado C.M."/>
            <person name="Mercado I.M."/>
            <person name="Morales K.M."/>
            <person name="Morgan M.M."/>
            <person name="Munidasa M.M."/>
            <person name="Ngo D.N."/>
            <person name="Nguyen L.N."/>
            <person name="Nguyen T.N."/>
            <person name="Nguyen N.N."/>
            <person name="Obregon M.O."/>
            <person name="Okwuonu G.O."/>
            <person name="Ongeri F.O."/>
            <person name="Onwere C.O."/>
            <person name="Osifeso I.O."/>
            <person name="Parra A.P."/>
            <person name="Patil S.P."/>
            <person name="Perez A.P."/>
            <person name="Perez Y.P."/>
            <person name="Pham C.P."/>
            <person name="Pu L.-L.P."/>
            <person name="Puazo M.P."/>
            <person name="Quiroz J.Q."/>
            <person name="Rouhana J.R."/>
            <person name="Ruiz M.R."/>
            <person name="Ruiz S.-J.R."/>
            <person name="Saada N.S."/>
            <person name="Santibanez J.S."/>
            <person name="Scheel M.S."/>
            <person name="Schneider B.S."/>
            <person name="Simmons D.S."/>
            <person name="Sisson I.S."/>
            <person name="Tang L.-Y.T."/>
            <person name="Thornton R.T."/>
            <person name="Tisius J.T."/>
            <person name="Toledanes G.T."/>
            <person name="Trejos Z.T."/>
            <person name="Usmani K.U."/>
            <person name="Varghese R.V."/>
            <person name="Vattathil S.V."/>
            <person name="Vee V.V."/>
            <person name="Walker D.W."/>
            <person name="Weissenberger G.W."/>
            <person name="White C.W."/>
            <person name="Williams A.W."/>
            <person name="Woodworth J.W."/>
            <person name="Wright R.W."/>
            <person name="Zhu Y.Z."/>
            <person name="Han Y.H."/>
            <person name="Newsham I.N."/>
            <person name="Nazareth L.N."/>
            <person name="Worley K.W."/>
            <person name="Muzny D.M."/>
            <person name="Rogers J.R."/>
            <person name="Gibbs R.G."/>
        </authorList>
    </citation>
    <scope>NUCLEOTIDE SEQUENCE [LARGE SCALE GENOMIC DNA]</scope>
</reference>
<reference key="2">
    <citation type="unpublished observations" date="2017-04">
        <authorList>
            <person name="Puppione D.L."/>
        </authorList>
    </citation>
    <scope>IDENTIFICATION</scope>
</reference>
<reference key="3">
    <citation type="journal article" date="2013" name="Front. Biol.">
        <title>Proteogenomic Review of the Changes in Primate apoC-I during Evolution.</title>
        <authorList>
            <person name="Puppione D."/>
            <person name="Whitelegge J.P."/>
        </authorList>
    </citation>
    <scope>REVIEW</scope>
</reference>
<reference key="4">
    <citation type="journal article" date="2014" name="Comp. Biochem. Physiol.">
        <title>Higher primates, but not New World monkeys, have a duplicate set of enhancers flanking their apoC-I genes.</title>
        <authorList>
            <person name="Puppione D.L."/>
        </authorList>
    </citation>
    <scope>GENE DUPLICATION</scope>
</reference>
<name>APO1B_PAPAN</name>
<sequence length="83" mass="9418">MRLFLSLPVLVVVLSMVLEGPAPVQGAPDVSSALDKLKEFGNTLEDKAWEVINRIKQSEFPAKTRDWFSETFRKVKEKLKINS</sequence>
<protein>
    <recommendedName>
        <fullName>Apolipoprotein C-I, basic form</fullName>
        <shortName>Apo-CIB</shortName>
        <shortName>ApoC-IB</shortName>
    </recommendedName>
    <alternativeName>
        <fullName>Apolipoprotein C1B</fullName>
    </alternativeName>
    <component>
        <recommendedName>
            <fullName>Cholesteryl ester transfer inhibitor protein</fullName>
            <shortName>CETIP</shortName>
        </recommendedName>
    </component>
    <component>
        <recommendedName>
            <fullName>Truncated apolipoprotein C-I, basic form</fullName>
            <shortName>Apo-CIB'</shortName>
            <shortName>ApoC-IB'</shortName>
        </recommendedName>
    </component>
</protein>
<keyword id="KW-0445">Lipid transport</keyword>
<keyword id="KW-1185">Reference proteome</keyword>
<keyword id="KW-0964">Secreted</keyword>
<keyword id="KW-0732">Signal</keyword>
<keyword id="KW-0813">Transport</keyword>
<evidence type="ECO:0000250" key="1">
    <source>
        <dbReference type="UniProtKB" id="P02654"/>
    </source>
</evidence>
<evidence type="ECO:0000250" key="2">
    <source>
        <dbReference type="UniProtKB" id="P33047"/>
    </source>
</evidence>
<evidence type="ECO:0000250" key="3">
    <source>
        <dbReference type="UniProtKB" id="P34929"/>
    </source>
</evidence>
<evidence type="ECO:0000250" key="4">
    <source>
        <dbReference type="UniProtKB" id="P86336"/>
    </source>
</evidence>
<evidence type="ECO:0000255" key="5"/>
<evidence type="ECO:0000303" key="6">
    <source>
    </source>
</evidence>
<evidence type="ECO:0000305" key="7"/>
<dbReference type="EMBL" id="JH682906">
    <property type="status" value="NOT_ANNOTATED_CDS"/>
    <property type="molecule type" value="Genomic_DNA"/>
</dbReference>
<dbReference type="RefSeq" id="XP_009196976.1">
    <property type="nucleotide sequence ID" value="XM_009198712.4"/>
</dbReference>
<dbReference type="SMR" id="A0A096P2H7"/>
<dbReference type="STRING" id="9555.ENSPANP00000029692"/>
<dbReference type="GeneID" id="101022473"/>
<dbReference type="KEGG" id="panu:101022473"/>
<dbReference type="CTD" id="341"/>
<dbReference type="eggNOG" id="ENOG502SEU4">
    <property type="taxonomic scope" value="Eukaryota"/>
</dbReference>
<dbReference type="HOGENOM" id="CLU_160094_1_0_1"/>
<dbReference type="OrthoDB" id="14429at314294"/>
<dbReference type="Proteomes" id="UP000028761">
    <property type="component" value="Unplaced"/>
</dbReference>
<dbReference type="GO" id="GO:0034364">
    <property type="term" value="C:high-density lipoprotein particle"/>
    <property type="evidence" value="ECO:0007669"/>
    <property type="project" value="TreeGrafter"/>
</dbReference>
<dbReference type="GO" id="GO:0034361">
    <property type="term" value="C:very-low-density lipoprotein particle"/>
    <property type="evidence" value="ECO:0007669"/>
    <property type="project" value="TreeGrafter"/>
</dbReference>
<dbReference type="GO" id="GO:0005504">
    <property type="term" value="F:fatty acid binding"/>
    <property type="evidence" value="ECO:0007669"/>
    <property type="project" value="TreeGrafter"/>
</dbReference>
<dbReference type="GO" id="GO:0004859">
    <property type="term" value="F:phospholipase inhibitor activity"/>
    <property type="evidence" value="ECO:0007669"/>
    <property type="project" value="TreeGrafter"/>
</dbReference>
<dbReference type="GO" id="GO:0006869">
    <property type="term" value="P:lipid transport"/>
    <property type="evidence" value="ECO:0007669"/>
    <property type="project" value="UniProtKB-KW"/>
</dbReference>
<dbReference type="GO" id="GO:0042157">
    <property type="term" value="P:lipoprotein metabolic process"/>
    <property type="evidence" value="ECO:0007669"/>
    <property type="project" value="InterPro"/>
</dbReference>
<dbReference type="GO" id="GO:0032375">
    <property type="term" value="P:negative regulation of cholesterol transport"/>
    <property type="evidence" value="ECO:0007669"/>
    <property type="project" value="TreeGrafter"/>
</dbReference>
<dbReference type="GO" id="GO:0050995">
    <property type="term" value="P:negative regulation of lipid catabolic process"/>
    <property type="evidence" value="ECO:0007669"/>
    <property type="project" value="TreeGrafter"/>
</dbReference>
<dbReference type="GO" id="GO:0010916">
    <property type="term" value="P:negative regulation of very-low-density lipoprotein particle clearance"/>
    <property type="evidence" value="ECO:0007669"/>
    <property type="project" value="TreeGrafter"/>
</dbReference>
<dbReference type="GO" id="GO:0006641">
    <property type="term" value="P:triglyceride metabolic process"/>
    <property type="evidence" value="ECO:0007669"/>
    <property type="project" value="TreeGrafter"/>
</dbReference>
<dbReference type="GO" id="GO:0034447">
    <property type="term" value="P:very-low-density lipoprotein particle clearance"/>
    <property type="evidence" value="ECO:0007669"/>
    <property type="project" value="TreeGrafter"/>
</dbReference>
<dbReference type="Gene3D" id="4.10.260.30">
    <property type="entry name" value="Apolipoprotein C-I"/>
    <property type="match status" value="1"/>
</dbReference>
<dbReference type="InterPro" id="IPR043081">
    <property type="entry name" value="ApoC-1_sf"/>
</dbReference>
<dbReference type="InterPro" id="IPR006781">
    <property type="entry name" value="ApoC-I"/>
</dbReference>
<dbReference type="PANTHER" id="PTHR16565">
    <property type="entry name" value="APOLIPOPROTEIN C-I"/>
    <property type="match status" value="1"/>
</dbReference>
<dbReference type="PANTHER" id="PTHR16565:SF2">
    <property type="entry name" value="APOLIPOPROTEIN C-I"/>
    <property type="match status" value="1"/>
</dbReference>
<dbReference type="Pfam" id="PF04691">
    <property type="entry name" value="ApoC-I"/>
    <property type="match status" value="1"/>
</dbReference>
<organism>
    <name type="scientific">Papio anubis</name>
    <name type="common">Olive baboon</name>
    <dbReference type="NCBI Taxonomy" id="9555"/>
    <lineage>
        <taxon>Eukaryota</taxon>
        <taxon>Metazoa</taxon>
        <taxon>Chordata</taxon>
        <taxon>Craniata</taxon>
        <taxon>Vertebrata</taxon>
        <taxon>Euteleostomi</taxon>
        <taxon>Mammalia</taxon>
        <taxon>Eutheria</taxon>
        <taxon>Euarchontoglires</taxon>
        <taxon>Primates</taxon>
        <taxon>Haplorrhini</taxon>
        <taxon>Catarrhini</taxon>
        <taxon>Cercopithecidae</taxon>
        <taxon>Cercopithecinae</taxon>
        <taxon>Papio</taxon>
    </lineage>
</organism>
<gene>
    <name type="primary">APOC1</name>
    <name type="synonym">APOC1B</name>
</gene>
<accession>A0A096P2H7</accession>
<comment type="function">
    <text evidence="1 2">Inhibitor of lipoprotein binding to the low density lipoprotein (LDL) receptor, LDL receptor-related protein, and very low density lipoprotein (VLDL) receptor. Associates with high density lipoproteins (HDL) and the triacylglycerol-rich lipoproteins in the plasma and makes up about 10% of the protein of the VLDL and 2% of that of HDL. Appears to interfere directly with fatty acid uptake and is also the major plasma inhibitor of cholesteryl ester transfer protein (CETP). Binds free fatty acids and reduces their intracellular esterification. Modulates the interaction of APOE with beta-migrating VLDL and inhibits binding of beta-VLDL to the LDL receptor-related protein.</text>
</comment>
<comment type="subcellular location">
    <subcellularLocation>
        <location evidence="1">Secreted</location>
    </subcellularLocation>
</comment>
<comment type="miscellaneous">
    <text evidence="6">Apolipoprotein C-I is present in acidic (APOC1A) and basic (APOC1B) forms in P.paniscus, P.abelii and P.troglodytes and perhaps also in baboons and macaques. The two genes for ApoC-I arose through a duplication process that occurred after the divergence of New World monkeys from the human lineage. In human, the acidic form has become a pseudogene sometime between the divergence of bonobos and chimpanzees from the human lineage and the appearance of the Denisovans. Pseudogenization resulted when the codon for the penultimate amino acid in the signal sequence was changed to a stop codon.</text>
</comment>
<comment type="similarity">
    <text evidence="7">Belongs to the apolipoprotein C1 family.</text>
</comment>
<proteinExistence type="inferred from homology"/>